<organism>
    <name type="scientific">Mus musculus</name>
    <name type="common">Mouse</name>
    <dbReference type="NCBI Taxonomy" id="10090"/>
    <lineage>
        <taxon>Eukaryota</taxon>
        <taxon>Metazoa</taxon>
        <taxon>Chordata</taxon>
        <taxon>Craniata</taxon>
        <taxon>Vertebrata</taxon>
        <taxon>Euteleostomi</taxon>
        <taxon>Mammalia</taxon>
        <taxon>Eutheria</taxon>
        <taxon>Euarchontoglires</taxon>
        <taxon>Glires</taxon>
        <taxon>Rodentia</taxon>
        <taxon>Myomorpha</taxon>
        <taxon>Muroidea</taxon>
        <taxon>Muridae</taxon>
        <taxon>Murinae</taxon>
        <taxon>Mus</taxon>
        <taxon>Mus</taxon>
    </lineage>
</organism>
<protein>
    <recommendedName>
        <fullName>Macrophage colony-stimulating factor 1 receptor</fullName>
    </recommendedName>
    <alternativeName>
        <fullName>CSF-1 receptor</fullName>
        <shortName>CSF-1-R</shortName>
        <shortName>CSF-1R</shortName>
        <shortName>M-CSF-R</shortName>
        <ecNumber>2.7.10.1</ecNumber>
    </alternativeName>
    <alternativeName>
        <fullName>Proto-oncogene c-Fms</fullName>
    </alternativeName>
    <cdAntigenName>CD115</cdAntigenName>
</protein>
<keyword id="KW-0002">3D-structure</keyword>
<keyword id="KW-0067">ATP-binding</keyword>
<keyword id="KW-1003">Cell membrane</keyword>
<keyword id="KW-1015">Disulfide bond</keyword>
<keyword id="KW-0325">Glycoprotein</keyword>
<keyword id="KW-0391">Immunity</keyword>
<keyword id="KW-0393">Immunoglobulin domain</keyword>
<keyword id="KW-0395">Inflammatory response</keyword>
<keyword id="KW-0399">Innate immunity</keyword>
<keyword id="KW-0418">Kinase</keyword>
<keyword id="KW-0472">Membrane</keyword>
<keyword id="KW-0547">Nucleotide-binding</keyword>
<keyword id="KW-0597">Phosphoprotein</keyword>
<keyword id="KW-0656">Proto-oncogene</keyword>
<keyword id="KW-0675">Receptor</keyword>
<keyword id="KW-1185">Reference proteome</keyword>
<keyword id="KW-0677">Repeat</keyword>
<keyword id="KW-0732">Signal</keyword>
<keyword id="KW-0808">Transferase</keyword>
<keyword id="KW-0812">Transmembrane</keyword>
<keyword id="KW-1133">Transmembrane helix</keyword>
<keyword id="KW-0829">Tyrosine-protein kinase</keyword>
<keyword id="KW-0832">Ubl conjugation</keyword>
<name>CSF1R_MOUSE</name>
<feature type="signal peptide" evidence="3">
    <location>
        <begin position="1"/>
        <end position="19"/>
    </location>
</feature>
<feature type="chain" id="PRO_0000016766" description="Macrophage colony-stimulating factor 1 receptor">
    <location>
        <begin position="20"/>
        <end position="977"/>
    </location>
</feature>
<feature type="topological domain" description="Extracellular" evidence="3">
    <location>
        <begin position="20"/>
        <end position="515"/>
    </location>
</feature>
<feature type="transmembrane region" description="Helical" evidence="3">
    <location>
        <begin position="516"/>
        <end position="536"/>
    </location>
</feature>
<feature type="topological domain" description="Cytoplasmic" evidence="3">
    <location>
        <begin position="537"/>
        <end position="977"/>
    </location>
</feature>
<feature type="domain" description="Ig-like C2-type 1">
    <location>
        <begin position="24"/>
        <end position="104"/>
    </location>
</feature>
<feature type="domain" description="Ig-like C2-type 2">
    <location>
        <begin position="107"/>
        <end position="197"/>
    </location>
</feature>
<feature type="domain" description="Ig-like C2-type 3">
    <location>
        <begin position="204"/>
        <end position="298"/>
    </location>
</feature>
<feature type="domain" description="Ig-like C2-type 4">
    <location>
        <begin position="299"/>
        <end position="397"/>
    </location>
</feature>
<feature type="domain" description="Ig-like C2-type 5">
    <location>
        <begin position="398"/>
        <end position="503"/>
    </location>
</feature>
<feature type="domain" description="Protein kinase" evidence="5">
    <location>
        <begin position="580"/>
        <end position="913"/>
    </location>
</feature>
<feature type="region of interest" description="Regulatory juxtamembrane domain" evidence="1">
    <location>
        <begin position="540"/>
        <end position="572"/>
    </location>
</feature>
<feature type="region of interest" description="Activation loop" evidence="1">
    <location>
        <begin position="794"/>
        <end position="816"/>
    </location>
</feature>
<feature type="region of interest" description="Disordered" evidence="7">
    <location>
        <begin position="921"/>
        <end position="957"/>
    </location>
</feature>
<feature type="compositionally biased region" description="Gly residues" evidence="7">
    <location>
        <begin position="929"/>
        <end position="941"/>
    </location>
</feature>
<feature type="active site" description="Proton acceptor" evidence="5 6">
    <location>
        <position position="776"/>
    </location>
</feature>
<feature type="binding site" evidence="5">
    <location>
        <begin position="586"/>
        <end position="594"/>
    </location>
    <ligand>
        <name>ATP</name>
        <dbReference type="ChEBI" id="CHEBI:30616"/>
    </ligand>
</feature>
<feature type="binding site" evidence="31">
    <location>
        <position position="614"/>
    </location>
    <ligand>
        <name>ATP</name>
        <dbReference type="ChEBI" id="CHEBI:30616"/>
    </ligand>
</feature>
<feature type="modified residue" description="Phosphotyrosine; by autocatalysis" evidence="2">
    <location>
        <position position="544"/>
    </location>
</feature>
<feature type="modified residue" description="Phosphotyrosine; by autocatalysis" evidence="12 24 28">
    <location>
        <position position="559"/>
    </location>
</feature>
<feature type="modified residue" description="Phosphotyrosine; by autocatalysis" evidence="29">
    <location>
        <position position="697"/>
    </location>
</feature>
<feature type="modified residue" description="Phosphotyrosine; by autocatalysis" evidence="14 25 26 29">
    <location>
        <position position="706"/>
    </location>
</feature>
<feature type="modified residue" description="Phosphoserine" evidence="33">
    <location>
        <position position="711"/>
    </location>
</feature>
<feature type="modified residue" description="Phosphotyrosine; by autocatalysis" evidence="24 26 29">
    <location>
        <position position="721"/>
    </location>
</feature>
<feature type="modified residue" description="Phosphotyrosine; by autocatalysis" evidence="14 24 25 28 29">
    <location>
        <position position="807"/>
    </location>
</feature>
<feature type="modified residue" description="Phosphotyrosine; by autocatalysis" evidence="32">
    <location>
        <position position="921"/>
    </location>
</feature>
<feature type="modified residue" description="Phosphotyrosine; by autocatalysis" evidence="11">
    <location>
        <position position="974"/>
    </location>
</feature>
<feature type="glycosylation site" description="N-linked (GlcNAc...) asparagine" evidence="22">
    <location>
        <position position="45"/>
    </location>
</feature>
<feature type="glycosylation site" description="N-linked (GlcNAc...) asparagine" evidence="22">
    <location>
        <position position="73"/>
    </location>
</feature>
<feature type="glycosylation site" description="N-linked (GlcNAc...) asparagine" evidence="3">
    <location>
        <position position="302"/>
    </location>
</feature>
<feature type="glycosylation site" description="N-linked (GlcNAc...) asparagine" evidence="3">
    <location>
        <position position="335"/>
    </location>
</feature>
<feature type="glycosylation site" description="N-linked (GlcNAc...) asparagine" evidence="3">
    <location>
        <position position="389"/>
    </location>
</feature>
<feature type="glycosylation site" description="N-linked (GlcNAc...) asparagine" evidence="3">
    <location>
        <position position="410"/>
    </location>
</feature>
<feature type="glycosylation site" description="N-linked (GlcNAc...) asparagine" evidence="3">
    <location>
        <position position="449"/>
    </location>
</feature>
<feature type="glycosylation site" description="N-linked (GlcNAc...) asparagine" evidence="3">
    <location>
        <position position="478"/>
    </location>
</feature>
<feature type="glycosylation site" description="N-linked (GlcNAc...) asparagine" evidence="15">
    <location>
        <position position="491"/>
    </location>
</feature>
<feature type="disulfide bond" evidence="4 22">
    <location>
        <begin position="42"/>
        <end position="84"/>
    </location>
</feature>
<feature type="disulfide bond" evidence="4 22">
    <location>
        <begin position="127"/>
        <end position="177"/>
    </location>
</feature>
<feature type="disulfide bond" evidence="4 22">
    <location>
        <begin position="224"/>
        <end position="278"/>
    </location>
</feature>
<feature type="disulfide bond" evidence="4">
    <location>
        <begin position="417"/>
        <end position="483"/>
    </location>
</feature>
<feature type="mutagenesis site" description="No effect on binding to THOC5." evidence="8">
    <original>Y</original>
    <variation>F</variation>
    <location>
        <position position="544"/>
    </location>
</feature>
<feature type="mutagenesis site" description="Reduced interaction with CBL. Prolonged signaling, due to reduced internalization and degradation. Reduced interaction with FYN. Promotes cell proliferation. Reduced autophosphorylation at Tyr-807." evidence="12 18 28">
    <original>Y</original>
    <variation>F</variation>
    <location>
        <position position="559"/>
    </location>
</feature>
<feature type="mutagenesis site" description="Loss of kinase activity." evidence="8 29 30">
    <original>K</original>
    <variation>A</variation>
    <location>
        <position position="614"/>
    </location>
</feature>
<feature type="mutagenesis site" description="Loss of kinase activity. Abolishes binding to THOC5." evidence="8 29 30">
    <original>K</original>
    <variation>M</variation>
    <location>
        <position position="614"/>
    </location>
</feature>
<feature type="mutagenesis site" description="Abolishes interaction with GRB2." evidence="29 30">
    <original>Y</original>
    <variation>F</variation>
    <location>
        <position position="697"/>
    </location>
</feature>
<feature type="mutagenesis site" description="No effect on binding to THOC5. Slightly reduced enhancement of cell proliferation." evidence="8 14">
    <original>Y</original>
    <variation>F</variation>
    <location>
        <position position="706"/>
    </location>
</feature>
<feature type="mutagenesis site" description="Slightly impaired signaling." evidence="8 14">
    <original>Y</original>
    <variation>G</variation>
    <location>
        <position position="706"/>
    </location>
</feature>
<feature type="mutagenesis site" description="Abolishes interaction with PIK3R1. Strongly reduced phosphorylation of PLCG2. No effect on binding to THOC5." evidence="8 26 29 30">
    <original>Y</original>
    <variation>F</variation>
    <location>
        <position position="721"/>
    </location>
</feature>
<feature type="mutagenesis site" description="Reduced kinase activity. Strongly reduced phosphorylation of PLCG2. Diminishes binding to THOC5." evidence="8 14 30">
    <original>Y</original>
    <variation>F</variation>
    <location>
        <position position="807"/>
    </location>
</feature>
<feature type="mutagenesis site" description="May alter protein folding or stability. Loss of kinase activity. No effect on interaction with PIK3R1." evidence="8 14 30">
    <original>Y</original>
    <variation>G</variation>
    <location>
        <position position="807"/>
    </location>
</feature>
<feature type="sequence conflict" description="In Ref. 1; CAA29666." evidence="31" ref="1">
    <original>Y</original>
    <variation>I</variation>
    <location>
        <position position="57"/>
    </location>
</feature>
<feature type="sequence conflict" description="In Ref. 1; CAA29666." evidence="31" ref="1">
    <original>R</original>
    <variation>S</variation>
    <location>
        <position position="72"/>
    </location>
</feature>
<feature type="sequence conflict" description="In Ref. 1; CAA29666." evidence="31" ref="1">
    <original>F</original>
    <variation>S</variation>
    <location>
        <position position="162"/>
    </location>
</feature>
<feature type="sequence conflict" description="In Ref. 1; CAA29666." evidence="31" ref="1">
    <original>QV</original>
    <variation>HL</variation>
    <location>
        <begin position="446"/>
        <end position="447"/>
    </location>
</feature>
<feature type="sequence conflict" description="In Ref. 1; CAA29666." evidence="31" ref="1">
    <original>T</original>
    <variation>P</variation>
    <location>
        <position position="474"/>
    </location>
</feature>
<feature type="sequence conflict" description="In Ref. 1; CAA29666." evidence="31" ref="1">
    <original>I</original>
    <variation>Y</variation>
    <location>
        <position position="660"/>
    </location>
</feature>
<feature type="sequence conflict" description="In Ref. 1; CAA29666." evidence="31" ref="1">
    <original>L</original>
    <variation>H</variation>
    <location>
        <position position="669"/>
    </location>
</feature>
<feature type="sequence conflict" description="In Ref. 1; CAA29666." evidence="31" ref="1">
    <original>A</original>
    <variation>H</variation>
    <location>
        <position position="744"/>
    </location>
</feature>
<feature type="sequence conflict" description="In Ref. 1; CAA29666." evidence="31" ref="1">
    <location>
        <position position="814"/>
    </location>
</feature>
<feature type="sequence conflict" description="In Ref. 1; CAA29666." evidence="31" ref="1">
    <original>Y</original>
    <variation>I</variation>
    <location>
        <position position="830"/>
    </location>
</feature>
<feature type="sequence conflict" description="In Ref. 1; CAA29666." evidence="31" ref="1">
    <original>L</original>
    <variation>H</variation>
    <location>
        <position position="858"/>
    </location>
</feature>
<feature type="strand" evidence="34">
    <location>
        <begin position="22"/>
        <end position="25"/>
    </location>
</feature>
<feature type="strand" evidence="34">
    <location>
        <begin position="27"/>
        <end position="32"/>
    </location>
</feature>
<feature type="strand" evidence="34">
    <location>
        <begin position="38"/>
        <end position="43"/>
    </location>
</feature>
<feature type="strand" evidence="34">
    <location>
        <begin position="49"/>
        <end position="51"/>
    </location>
</feature>
<feature type="strand" evidence="34">
    <location>
        <begin position="55"/>
        <end position="60"/>
    </location>
</feature>
<feature type="strand" evidence="35">
    <location>
        <begin position="64"/>
        <end position="66"/>
    </location>
</feature>
<feature type="strand" evidence="34">
    <location>
        <begin position="68"/>
        <end position="73"/>
    </location>
</feature>
<feature type="helix" evidence="34">
    <location>
        <begin position="76"/>
        <end position="78"/>
    </location>
</feature>
<feature type="strand" evidence="34">
    <location>
        <begin position="80"/>
        <end position="85"/>
    </location>
</feature>
<feature type="strand" evidence="34">
    <location>
        <begin position="95"/>
        <end position="101"/>
    </location>
</feature>
<feature type="strand" evidence="34">
    <location>
        <begin position="107"/>
        <end position="111"/>
    </location>
</feature>
<feature type="strand" evidence="34">
    <location>
        <begin position="113"/>
        <end position="118"/>
    </location>
</feature>
<feature type="strand" evidence="34">
    <location>
        <begin position="123"/>
        <end position="125"/>
    </location>
</feature>
<feature type="strand" evidence="34">
    <location>
        <begin position="127"/>
        <end position="130"/>
    </location>
</feature>
<feature type="helix" evidence="34">
    <location>
        <begin position="132"/>
        <end position="136"/>
    </location>
</feature>
<feature type="strand" evidence="34">
    <location>
        <begin position="137"/>
        <end position="142"/>
    </location>
</feature>
<feature type="helix" evidence="34">
    <location>
        <begin position="143"/>
        <end position="145"/>
    </location>
</feature>
<feature type="strand" evidence="34">
    <location>
        <begin position="154"/>
        <end position="157"/>
    </location>
</feature>
<feature type="turn" evidence="34">
    <location>
        <begin position="158"/>
        <end position="160"/>
    </location>
</feature>
<feature type="strand" evidence="34">
    <location>
        <begin position="161"/>
        <end position="166"/>
    </location>
</feature>
<feature type="helix" evidence="34">
    <location>
        <begin position="169"/>
        <end position="171"/>
    </location>
</feature>
<feature type="strand" evidence="34">
    <location>
        <begin position="173"/>
        <end position="181"/>
    </location>
</feature>
<feature type="strand" evidence="34">
    <location>
        <begin position="184"/>
        <end position="187"/>
    </location>
</feature>
<feature type="strand" evidence="34">
    <location>
        <begin position="191"/>
        <end position="198"/>
    </location>
</feature>
<feature type="strand" evidence="34">
    <location>
        <begin position="204"/>
        <end position="213"/>
    </location>
</feature>
<feature type="strand" evidence="34">
    <location>
        <begin position="216"/>
        <end position="218"/>
    </location>
</feature>
<feature type="strand" evidence="34">
    <location>
        <begin position="220"/>
        <end position="231"/>
    </location>
</feature>
<feature type="strand" evidence="34">
    <location>
        <begin position="234"/>
        <end position="239"/>
    </location>
</feature>
<feature type="strand" evidence="34">
    <location>
        <begin position="248"/>
        <end position="252"/>
    </location>
</feature>
<feature type="strand" evidence="34">
    <location>
        <begin position="254"/>
        <end position="267"/>
    </location>
</feature>
<feature type="strand" evidence="34">
    <location>
        <begin position="270"/>
        <end position="272"/>
    </location>
</feature>
<feature type="strand" evidence="34">
    <location>
        <begin position="274"/>
        <end position="281"/>
    </location>
</feature>
<feature type="strand" evidence="34">
    <location>
        <begin position="286"/>
        <end position="294"/>
    </location>
</feature>
<dbReference type="EC" id="2.7.10.1"/>
<dbReference type="EMBL" id="X06368">
    <property type="protein sequence ID" value="CAA29666.1"/>
    <property type="molecule type" value="mRNA"/>
</dbReference>
<dbReference type="EMBL" id="AK004947">
    <property type="protein sequence ID" value="BAB23691.1"/>
    <property type="molecule type" value="mRNA"/>
</dbReference>
<dbReference type="EMBL" id="AK079247">
    <property type="protein sequence ID" value="BAC37587.1"/>
    <property type="molecule type" value="mRNA"/>
</dbReference>
<dbReference type="EMBL" id="AK143545">
    <property type="protein sequence ID" value="BAE25430.1"/>
    <property type="molecule type" value="mRNA"/>
</dbReference>
<dbReference type="EMBL" id="AK154653">
    <property type="protein sequence ID" value="BAE32744.1"/>
    <property type="molecule type" value="mRNA"/>
</dbReference>
<dbReference type="EMBL" id="BC043054">
    <property type="protein sequence ID" value="AAH43054.1"/>
    <property type="molecule type" value="mRNA"/>
</dbReference>
<dbReference type="EMBL" id="S62219">
    <property type="status" value="NOT_ANNOTATED_CDS"/>
    <property type="molecule type" value="Genomic_DNA"/>
</dbReference>
<dbReference type="CCDS" id="CCDS29280.1"/>
<dbReference type="PIR" id="S01880">
    <property type="entry name" value="TVMSMD"/>
</dbReference>
<dbReference type="RefSeq" id="NP_001032948.2">
    <property type="nucleotide sequence ID" value="NM_001037859.2"/>
</dbReference>
<dbReference type="RefSeq" id="XP_006525647.1">
    <property type="nucleotide sequence ID" value="XM_006525584.1"/>
</dbReference>
<dbReference type="RefSeq" id="XP_006525648.1">
    <property type="nucleotide sequence ID" value="XM_006525585.3"/>
</dbReference>
<dbReference type="RefSeq" id="XP_006525649.1">
    <property type="nucleotide sequence ID" value="XM_006525586.3"/>
</dbReference>
<dbReference type="RefSeq" id="XP_017173299.1">
    <property type="nucleotide sequence ID" value="XM_017317810.1"/>
</dbReference>
<dbReference type="PDB" id="3EJJ">
    <property type="method" value="X-ray"/>
    <property type="resolution" value="2.40 A"/>
    <property type="chains" value="X=20-296"/>
</dbReference>
<dbReference type="PDB" id="4EXP">
    <property type="method" value="X-ray"/>
    <property type="resolution" value="2.80 A"/>
    <property type="chains" value="X=20-298"/>
</dbReference>
<dbReference type="PDBsum" id="3EJJ"/>
<dbReference type="PDBsum" id="4EXP"/>
<dbReference type="SMR" id="P09581"/>
<dbReference type="BioGRID" id="198928">
    <property type="interactions" value="22"/>
</dbReference>
<dbReference type="DIP" id="DIP-46415N"/>
<dbReference type="FunCoup" id="P09581">
    <property type="interactions" value="1043"/>
</dbReference>
<dbReference type="IntAct" id="P09581">
    <property type="interactions" value="8"/>
</dbReference>
<dbReference type="MINT" id="P09581"/>
<dbReference type="STRING" id="10090.ENSMUSP00000110923"/>
<dbReference type="BindingDB" id="P09581"/>
<dbReference type="ChEMBL" id="CHEMBL5570"/>
<dbReference type="DrugCentral" id="P09581"/>
<dbReference type="GlyCosmos" id="P09581">
    <property type="glycosylation" value="9 sites, No reported glycans"/>
</dbReference>
<dbReference type="GlyGen" id="P09581">
    <property type="glycosylation" value="10 sites, 3 N-linked glycans (5 sites)"/>
</dbReference>
<dbReference type="iPTMnet" id="P09581"/>
<dbReference type="PhosphoSitePlus" id="P09581"/>
<dbReference type="CPTAC" id="non-CPTAC-3547"/>
<dbReference type="CPTAC" id="non-CPTAC-3548"/>
<dbReference type="PaxDb" id="10090-ENSMUSP00000025523"/>
<dbReference type="PeptideAtlas" id="P09581"/>
<dbReference type="ProteomicsDB" id="285343"/>
<dbReference type="Antibodypedia" id="1201">
    <property type="antibodies" value="1898 antibodies from 46 providers"/>
</dbReference>
<dbReference type="DNASU" id="12978"/>
<dbReference type="Ensembl" id="ENSMUST00000025523.13">
    <property type="protein sequence ID" value="ENSMUSP00000025523.7"/>
    <property type="gene ID" value="ENSMUSG00000024621.17"/>
</dbReference>
<dbReference type="Ensembl" id="ENSMUST00000115268.4">
    <property type="protein sequence ID" value="ENSMUSP00000110923.4"/>
    <property type="gene ID" value="ENSMUSG00000024621.17"/>
</dbReference>
<dbReference type="GeneID" id="12978"/>
<dbReference type="KEGG" id="mmu:12978"/>
<dbReference type="UCSC" id="uc008fbn.1">
    <property type="organism name" value="mouse"/>
</dbReference>
<dbReference type="AGR" id="MGI:1339758"/>
<dbReference type="CTD" id="1436"/>
<dbReference type="MGI" id="MGI:1339758">
    <property type="gene designation" value="Csf1r"/>
</dbReference>
<dbReference type="VEuPathDB" id="HostDB:ENSMUSG00000024621"/>
<dbReference type="eggNOG" id="KOG0200">
    <property type="taxonomic scope" value="Eukaryota"/>
</dbReference>
<dbReference type="GeneTree" id="ENSGT00940000155506"/>
<dbReference type="HOGENOM" id="CLU_000288_49_0_1"/>
<dbReference type="InParanoid" id="P09581"/>
<dbReference type="OMA" id="TIHKAKY"/>
<dbReference type="OrthoDB" id="6077854at2759"/>
<dbReference type="PhylomeDB" id="P09581"/>
<dbReference type="TreeFam" id="TF325768"/>
<dbReference type="BRENDA" id="2.7.10.1">
    <property type="organism ID" value="3474"/>
</dbReference>
<dbReference type="Reactome" id="R-MMU-449836">
    <property type="pathway name" value="Other interleukin signaling"/>
</dbReference>
<dbReference type="BioGRID-ORCS" id="12978">
    <property type="hits" value="2 hits in 79 CRISPR screens"/>
</dbReference>
<dbReference type="ChiTaRS" id="Csf1r">
    <property type="organism name" value="mouse"/>
</dbReference>
<dbReference type="EvolutionaryTrace" id="P09581"/>
<dbReference type="PRO" id="PR:P09581"/>
<dbReference type="Proteomes" id="UP000000589">
    <property type="component" value="Chromosome 18"/>
</dbReference>
<dbReference type="RNAct" id="P09581">
    <property type="molecule type" value="protein"/>
</dbReference>
<dbReference type="Bgee" id="ENSMUSG00000024621">
    <property type="expression patterns" value="Expressed in stroma of bone marrow and 257 other cell types or tissues"/>
</dbReference>
<dbReference type="ExpressionAtlas" id="P09581">
    <property type="expression patterns" value="baseline and differential"/>
</dbReference>
<dbReference type="GO" id="GO:0009986">
    <property type="term" value="C:cell surface"/>
    <property type="evidence" value="ECO:0000314"/>
    <property type="project" value="UniProtKB"/>
</dbReference>
<dbReference type="GO" id="GO:1990682">
    <property type="term" value="C:CSF1-CSF1R complex"/>
    <property type="evidence" value="ECO:0000314"/>
    <property type="project" value="BHF-UCL"/>
</dbReference>
<dbReference type="GO" id="GO:0016020">
    <property type="term" value="C:membrane"/>
    <property type="evidence" value="ECO:0000314"/>
    <property type="project" value="MGI"/>
</dbReference>
<dbReference type="GO" id="GO:0005654">
    <property type="term" value="C:nucleoplasm"/>
    <property type="evidence" value="ECO:0007669"/>
    <property type="project" value="Ensembl"/>
</dbReference>
<dbReference type="GO" id="GO:0005886">
    <property type="term" value="C:plasma membrane"/>
    <property type="evidence" value="ECO:0000314"/>
    <property type="project" value="MGI"/>
</dbReference>
<dbReference type="GO" id="GO:0005524">
    <property type="term" value="F:ATP binding"/>
    <property type="evidence" value="ECO:0007669"/>
    <property type="project" value="UniProtKB-KW"/>
</dbReference>
<dbReference type="GO" id="GO:0019955">
    <property type="term" value="F:cytokine binding"/>
    <property type="evidence" value="ECO:0000314"/>
    <property type="project" value="UniProtKB"/>
</dbReference>
<dbReference type="GO" id="GO:0005011">
    <property type="term" value="F:macrophage colony-stimulating factor receptor activity"/>
    <property type="evidence" value="ECO:0000314"/>
    <property type="project" value="BHF-UCL"/>
</dbReference>
<dbReference type="GO" id="GO:0042803">
    <property type="term" value="F:protein homodimerization activity"/>
    <property type="evidence" value="ECO:0000353"/>
    <property type="project" value="BHF-UCL"/>
</dbReference>
<dbReference type="GO" id="GO:0019903">
    <property type="term" value="F:protein phosphatase binding"/>
    <property type="evidence" value="ECO:0000353"/>
    <property type="project" value="UniProtKB"/>
</dbReference>
<dbReference type="GO" id="GO:0004713">
    <property type="term" value="F:protein tyrosine kinase activity"/>
    <property type="evidence" value="ECO:0000304"/>
    <property type="project" value="Reactome"/>
</dbReference>
<dbReference type="GO" id="GO:0004714">
    <property type="term" value="F:transmembrane receptor protein tyrosine kinase activity"/>
    <property type="evidence" value="ECO:0000314"/>
    <property type="project" value="MGI"/>
</dbReference>
<dbReference type="GO" id="GO:0007411">
    <property type="term" value="P:axon guidance"/>
    <property type="evidence" value="ECO:0000315"/>
    <property type="project" value="ParkinsonsUK-UCL"/>
</dbReference>
<dbReference type="GO" id="GO:0007169">
    <property type="term" value="P:cell surface receptor protein tyrosine kinase signaling pathway"/>
    <property type="evidence" value="ECO:0000314"/>
    <property type="project" value="BHF-UCL"/>
</dbReference>
<dbReference type="GO" id="GO:0045217">
    <property type="term" value="P:cell-cell junction maintenance"/>
    <property type="evidence" value="ECO:0007669"/>
    <property type="project" value="Ensembl"/>
</dbReference>
<dbReference type="GO" id="GO:0071345">
    <property type="term" value="P:cellular response to cytokine stimulus"/>
    <property type="evidence" value="ECO:0000315"/>
    <property type="project" value="UniProtKB"/>
</dbReference>
<dbReference type="GO" id="GO:0036006">
    <property type="term" value="P:cellular response to macrophage colony-stimulating factor stimulus"/>
    <property type="evidence" value="ECO:0000315"/>
    <property type="project" value="UniProtKB"/>
</dbReference>
<dbReference type="GO" id="GO:0021879">
    <property type="term" value="P:forebrain neuron differentiation"/>
    <property type="evidence" value="ECO:0000315"/>
    <property type="project" value="ParkinsonsUK-UCL"/>
</dbReference>
<dbReference type="GO" id="GO:0006954">
    <property type="term" value="P:inflammatory response"/>
    <property type="evidence" value="ECO:0007669"/>
    <property type="project" value="UniProtKB-KW"/>
</dbReference>
<dbReference type="GO" id="GO:0045087">
    <property type="term" value="P:innate immune response"/>
    <property type="evidence" value="ECO:0007669"/>
    <property type="project" value="UniProtKB-KW"/>
</dbReference>
<dbReference type="GO" id="GO:0038145">
    <property type="term" value="P:macrophage colony-stimulating factor signaling pathway"/>
    <property type="evidence" value="ECO:0000314"/>
    <property type="project" value="BHF-UCL"/>
</dbReference>
<dbReference type="GO" id="GO:0061518">
    <property type="term" value="P:microglial cell proliferation"/>
    <property type="evidence" value="ECO:0000316"/>
    <property type="project" value="ARUK-UCL"/>
</dbReference>
<dbReference type="GO" id="GO:0043066">
    <property type="term" value="P:negative regulation of apoptotic process"/>
    <property type="evidence" value="ECO:0000315"/>
    <property type="project" value="ParkinsonsUK-UCL"/>
</dbReference>
<dbReference type="GO" id="GO:0008285">
    <property type="term" value="P:negative regulation of cell population proliferation"/>
    <property type="evidence" value="ECO:0000315"/>
    <property type="project" value="ParkinsonsUK-UCL"/>
</dbReference>
<dbReference type="GO" id="GO:0021772">
    <property type="term" value="P:olfactory bulb development"/>
    <property type="evidence" value="ECO:0000315"/>
    <property type="project" value="ParkinsonsUK-UCL"/>
</dbReference>
<dbReference type="GO" id="GO:0030316">
    <property type="term" value="P:osteoclast differentiation"/>
    <property type="evidence" value="ECO:0000315"/>
    <property type="project" value="UniProtKB"/>
</dbReference>
<dbReference type="GO" id="GO:0018108">
    <property type="term" value="P:peptidyl-tyrosine phosphorylation"/>
    <property type="evidence" value="ECO:0000314"/>
    <property type="project" value="UniProtKB"/>
</dbReference>
<dbReference type="GO" id="GO:0044794">
    <property type="term" value="P:positive regulation by host of viral process"/>
    <property type="evidence" value="ECO:0000316"/>
    <property type="project" value="ARUK-UCL"/>
</dbReference>
<dbReference type="GO" id="GO:0008284">
    <property type="term" value="P:positive regulation of cell population proliferation"/>
    <property type="evidence" value="ECO:0000315"/>
    <property type="project" value="UniProtKB"/>
</dbReference>
<dbReference type="GO" id="GO:0032722">
    <property type="term" value="P:positive regulation of chemokine production"/>
    <property type="evidence" value="ECO:0007669"/>
    <property type="project" value="Ensembl"/>
</dbReference>
<dbReference type="GO" id="GO:0070374">
    <property type="term" value="P:positive regulation of ERK1 and ERK2 cascade"/>
    <property type="evidence" value="ECO:0000315"/>
    <property type="project" value="UniProtKB"/>
</dbReference>
<dbReference type="GO" id="GO:0010759">
    <property type="term" value="P:positive regulation of macrophage chemotaxis"/>
    <property type="evidence" value="ECO:0007669"/>
    <property type="project" value="Ensembl"/>
</dbReference>
<dbReference type="GO" id="GO:0120041">
    <property type="term" value="P:positive regulation of macrophage proliferation"/>
    <property type="evidence" value="ECO:0007669"/>
    <property type="project" value="Ensembl"/>
</dbReference>
<dbReference type="GO" id="GO:0051897">
    <property type="term" value="P:positive regulation of phosphatidylinositol 3-kinase/protein kinase B signal transduction"/>
    <property type="evidence" value="ECO:0000315"/>
    <property type="project" value="UniProtKB"/>
</dbReference>
<dbReference type="GO" id="GO:0042531">
    <property type="term" value="P:positive regulation of tyrosine phosphorylation of STAT protein"/>
    <property type="evidence" value="ECO:0000315"/>
    <property type="project" value="UniProtKB"/>
</dbReference>
<dbReference type="GO" id="GO:0046777">
    <property type="term" value="P:protein autophosphorylation"/>
    <property type="evidence" value="ECO:0000314"/>
    <property type="project" value="UniProtKB"/>
</dbReference>
<dbReference type="GO" id="GO:0032956">
    <property type="term" value="P:regulation of actin cytoskeleton organization"/>
    <property type="evidence" value="ECO:0000315"/>
    <property type="project" value="UniProtKB"/>
</dbReference>
<dbReference type="GO" id="GO:0045124">
    <property type="term" value="P:regulation of bone resorption"/>
    <property type="evidence" value="ECO:0000250"/>
    <property type="project" value="UniProtKB"/>
</dbReference>
<dbReference type="GO" id="GO:0008360">
    <property type="term" value="P:regulation of cell shape"/>
    <property type="evidence" value="ECO:0000315"/>
    <property type="project" value="UniProtKB"/>
</dbReference>
<dbReference type="GO" id="GO:1905521">
    <property type="term" value="P:regulation of macrophage migration"/>
    <property type="evidence" value="ECO:0000315"/>
    <property type="project" value="UniProtKB"/>
</dbReference>
<dbReference type="GO" id="GO:0002931">
    <property type="term" value="P:response to ischemia"/>
    <property type="evidence" value="ECO:0000314"/>
    <property type="project" value="ARUK-UCL"/>
</dbReference>
<dbReference type="GO" id="GO:0031529">
    <property type="term" value="P:ruffle organization"/>
    <property type="evidence" value="ECO:0000315"/>
    <property type="project" value="UniProtKB"/>
</dbReference>
<dbReference type="CDD" id="cd05106">
    <property type="entry name" value="PTKc_CSF-1R"/>
    <property type="match status" value="1"/>
</dbReference>
<dbReference type="FunFam" id="2.60.40.10:FF:001029">
    <property type="entry name" value="Macrophage colony-stimulating factor 1 receptor"/>
    <property type="match status" value="1"/>
</dbReference>
<dbReference type="FunFam" id="2.60.40.10:FF:001088">
    <property type="entry name" value="Macrophage colony-stimulating factor 1 receptor"/>
    <property type="match status" value="1"/>
</dbReference>
<dbReference type="FunFam" id="2.60.40.10:FF:001101">
    <property type="entry name" value="Macrophage colony-stimulating factor 1 receptor"/>
    <property type="match status" value="1"/>
</dbReference>
<dbReference type="FunFam" id="2.60.40.10:FF:001160">
    <property type="entry name" value="Macrophage colony-stimulating factor 1 receptor"/>
    <property type="match status" value="1"/>
</dbReference>
<dbReference type="FunFam" id="2.60.40.10:FF:001169">
    <property type="entry name" value="Macrophage colony-stimulating factor 1 receptor"/>
    <property type="match status" value="1"/>
</dbReference>
<dbReference type="FunFam" id="1.10.510.10:FF:000177">
    <property type="entry name" value="Mast/stem cell growth factor receptor"/>
    <property type="match status" value="1"/>
</dbReference>
<dbReference type="FunFam" id="3.30.200.20:FF:000025">
    <property type="entry name" value="Platelet-derived growth factor receptor alpha"/>
    <property type="match status" value="1"/>
</dbReference>
<dbReference type="Gene3D" id="2.60.40.10">
    <property type="entry name" value="Immunoglobulins"/>
    <property type="match status" value="5"/>
</dbReference>
<dbReference type="Gene3D" id="3.30.200.20">
    <property type="entry name" value="Phosphorylase Kinase, domain 1"/>
    <property type="match status" value="1"/>
</dbReference>
<dbReference type="Gene3D" id="1.10.510.10">
    <property type="entry name" value="Transferase(Phosphotransferase) domain 1"/>
    <property type="match status" value="1"/>
</dbReference>
<dbReference type="InterPro" id="IPR030658">
    <property type="entry name" value="CSF-1_receptor"/>
</dbReference>
<dbReference type="InterPro" id="IPR007110">
    <property type="entry name" value="Ig-like_dom"/>
</dbReference>
<dbReference type="InterPro" id="IPR036179">
    <property type="entry name" value="Ig-like_dom_sf"/>
</dbReference>
<dbReference type="InterPro" id="IPR013783">
    <property type="entry name" value="Ig-like_fold"/>
</dbReference>
<dbReference type="InterPro" id="IPR003599">
    <property type="entry name" value="Ig_sub"/>
</dbReference>
<dbReference type="InterPro" id="IPR003598">
    <property type="entry name" value="Ig_sub2"/>
</dbReference>
<dbReference type="InterPro" id="IPR013151">
    <property type="entry name" value="Immunoglobulin_dom"/>
</dbReference>
<dbReference type="InterPro" id="IPR011009">
    <property type="entry name" value="Kinase-like_dom_sf"/>
</dbReference>
<dbReference type="InterPro" id="IPR000719">
    <property type="entry name" value="Prot_kinase_dom"/>
</dbReference>
<dbReference type="InterPro" id="IPR017441">
    <property type="entry name" value="Protein_kinase_ATP_BS"/>
</dbReference>
<dbReference type="InterPro" id="IPR050122">
    <property type="entry name" value="RTK"/>
</dbReference>
<dbReference type="InterPro" id="IPR001245">
    <property type="entry name" value="Ser-Thr/Tyr_kinase_cat_dom"/>
</dbReference>
<dbReference type="InterPro" id="IPR008266">
    <property type="entry name" value="Tyr_kinase_AS"/>
</dbReference>
<dbReference type="InterPro" id="IPR020635">
    <property type="entry name" value="Tyr_kinase_cat_dom"/>
</dbReference>
<dbReference type="InterPro" id="IPR001824">
    <property type="entry name" value="Tyr_kinase_rcpt_3_CS"/>
</dbReference>
<dbReference type="PANTHER" id="PTHR24416:SF47">
    <property type="entry name" value="MACROPHAGE COLONY-STIMULATING FACTOR 1 RECEPTOR"/>
    <property type="match status" value="1"/>
</dbReference>
<dbReference type="PANTHER" id="PTHR24416">
    <property type="entry name" value="TYROSINE-PROTEIN KINASE RECEPTOR"/>
    <property type="match status" value="1"/>
</dbReference>
<dbReference type="Pfam" id="PF00047">
    <property type="entry name" value="ig"/>
    <property type="match status" value="1"/>
</dbReference>
<dbReference type="Pfam" id="PF25305">
    <property type="entry name" value="Ig_PDGFR_d4"/>
    <property type="match status" value="1"/>
</dbReference>
<dbReference type="Pfam" id="PF07714">
    <property type="entry name" value="PK_Tyr_Ser-Thr"/>
    <property type="match status" value="1"/>
</dbReference>
<dbReference type="PIRSF" id="PIRSF500947">
    <property type="entry name" value="CSF-1_receptor"/>
    <property type="match status" value="1"/>
</dbReference>
<dbReference type="PIRSF" id="PIRSF000615">
    <property type="entry name" value="TyrPK_CSF1-R"/>
    <property type="match status" value="1"/>
</dbReference>
<dbReference type="SMART" id="SM00409">
    <property type="entry name" value="IG"/>
    <property type="match status" value="5"/>
</dbReference>
<dbReference type="SMART" id="SM00408">
    <property type="entry name" value="IGc2"/>
    <property type="match status" value="2"/>
</dbReference>
<dbReference type="SMART" id="SM00219">
    <property type="entry name" value="TyrKc"/>
    <property type="match status" value="1"/>
</dbReference>
<dbReference type="SUPFAM" id="SSF48726">
    <property type="entry name" value="Immunoglobulin"/>
    <property type="match status" value="5"/>
</dbReference>
<dbReference type="SUPFAM" id="SSF56112">
    <property type="entry name" value="Protein kinase-like (PK-like)"/>
    <property type="match status" value="1"/>
</dbReference>
<dbReference type="PROSITE" id="PS50835">
    <property type="entry name" value="IG_LIKE"/>
    <property type="match status" value="4"/>
</dbReference>
<dbReference type="PROSITE" id="PS00107">
    <property type="entry name" value="PROTEIN_KINASE_ATP"/>
    <property type="match status" value="1"/>
</dbReference>
<dbReference type="PROSITE" id="PS50011">
    <property type="entry name" value="PROTEIN_KINASE_DOM"/>
    <property type="match status" value="1"/>
</dbReference>
<dbReference type="PROSITE" id="PS00109">
    <property type="entry name" value="PROTEIN_KINASE_TYR"/>
    <property type="match status" value="1"/>
</dbReference>
<dbReference type="PROSITE" id="PS00240">
    <property type="entry name" value="RECEPTOR_TYR_KIN_III"/>
    <property type="match status" value="1"/>
</dbReference>
<gene>
    <name type="primary">Csf1r</name>
    <name type="synonym">Csfmr</name>
    <name type="synonym">Fms</name>
</gene>
<evidence type="ECO:0000250" key="1"/>
<evidence type="ECO:0000250" key="2">
    <source>
        <dbReference type="UniProtKB" id="P07333"/>
    </source>
</evidence>
<evidence type="ECO:0000255" key="3"/>
<evidence type="ECO:0000255" key="4">
    <source>
        <dbReference type="PROSITE-ProRule" id="PRU00114"/>
    </source>
</evidence>
<evidence type="ECO:0000255" key="5">
    <source>
        <dbReference type="PROSITE-ProRule" id="PRU00159"/>
    </source>
</evidence>
<evidence type="ECO:0000255" key="6">
    <source>
        <dbReference type="PROSITE-ProRule" id="PRU10028"/>
    </source>
</evidence>
<evidence type="ECO:0000256" key="7">
    <source>
        <dbReference type="SAM" id="MobiDB-lite"/>
    </source>
</evidence>
<evidence type="ECO:0000269" key="8">
    <source>
    </source>
</evidence>
<evidence type="ECO:0000269" key="9">
    <source>
    </source>
</evidence>
<evidence type="ECO:0000269" key="10">
    <source>
    </source>
</evidence>
<evidence type="ECO:0000269" key="11">
    <source>
    </source>
</evidence>
<evidence type="ECO:0000269" key="12">
    <source>
    </source>
</evidence>
<evidence type="ECO:0000269" key="13">
    <source>
    </source>
</evidence>
<evidence type="ECO:0000269" key="14">
    <source>
    </source>
</evidence>
<evidence type="ECO:0000269" key="15">
    <source>
    </source>
</evidence>
<evidence type="ECO:0000269" key="16">
    <source>
    </source>
</evidence>
<evidence type="ECO:0000269" key="17">
    <source>
    </source>
</evidence>
<evidence type="ECO:0000269" key="18">
    <source>
    </source>
</evidence>
<evidence type="ECO:0000269" key="19">
    <source>
    </source>
</evidence>
<evidence type="ECO:0000269" key="20">
    <source>
    </source>
</evidence>
<evidence type="ECO:0000269" key="21">
    <source>
    </source>
</evidence>
<evidence type="ECO:0000269" key="22">
    <source>
    </source>
</evidence>
<evidence type="ECO:0000269" key="23">
    <source>
    </source>
</evidence>
<evidence type="ECO:0000269" key="24">
    <source>
    </source>
</evidence>
<evidence type="ECO:0000269" key="25">
    <source>
    </source>
</evidence>
<evidence type="ECO:0000269" key="26">
    <source>
    </source>
</evidence>
<evidence type="ECO:0000269" key="27">
    <source>
    </source>
</evidence>
<evidence type="ECO:0000269" key="28">
    <source>
    </source>
</evidence>
<evidence type="ECO:0000269" key="29">
    <source>
    </source>
</evidence>
<evidence type="ECO:0000269" key="30">
    <source>
    </source>
</evidence>
<evidence type="ECO:0000305" key="31"/>
<evidence type="ECO:0000305" key="32">
    <source>
    </source>
</evidence>
<evidence type="ECO:0007744" key="33">
    <source>
    </source>
</evidence>
<evidence type="ECO:0007829" key="34">
    <source>
        <dbReference type="PDB" id="3EJJ"/>
    </source>
</evidence>
<evidence type="ECO:0007829" key="35">
    <source>
        <dbReference type="PDB" id="4EXP"/>
    </source>
</evidence>
<reference key="1">
    <citation type="journal article" date="1987" name="Oncogene Res.">
        <title>Murine c-fms cDNA: cloning, sequence analysis and retroviral expression.</title>
        <authorList>
            <person name="Rothwell V.M."/>
            <person name="Rohrschneider L.R."/>
        </authorList>
    </citation>
    <scope>NUCLEOTIDE SEQUENCE [MRNA]</scope>
</reference>
<reference key="2">
    <citation type="submission" date="1988-09" db="EMBL/GenBank/DDBJ databases">
        <authorList>
            <person name="Rothwell V.M."/>
        </authorList>
    </citation>
    <scope>SEQUENCE REVISION</scope>
</reference>
<reference key="3">
    <citation type="journal article" date="1993" name="Nucleic Acids Res.">
        <title>Reassessment of the murine c-fms proto-oncogene sequence.</title>
        <authorList>
            <person name="de Parseval N."/>
            <person name="Bordereaux D."/>
            <person name="Gisselbrecht S."/>
            <person name="Sola B."/>
        </authorList>
    </citation>
    <scope>SEQUENCE REVISION</scope>
</reference>
<reference key="4">
    <citation type="journal article" date="2005" name="Science">
        <title>The transcriptional landscape of the mammalian genome.</title>
        <authorList>
            <person name="Carninci P."/>
            <person name="Kasukawa T."/>
            <person name="Katayama S."/>
            <person name="Gough J."/>
            <person name="Frith M.C."/>
            <person name="Maeda N."/>
            <person name="Oyama R."/>
            <person name="Ravasi T."/>
            <person name="Lenhard B."/>
            <person name="Wells C."/>
            <person name="Kodzius R."/>
            <person name="Shimokawa K."/>
            <person name="Bajic V.B."/>
            <person name="Brenner S.E."/>
            <person name="Batalov S."/>
            <person name="Forrest A.R."/>
            <person name="Zavolan M."/>
            <person name="Davis M.J."/>
            <person name="Wilming L.G."/>
            <person name="Aidinis V."/>
            <person name="Allen J.E."/>
            <person name="Ambesi-Impiombato A."/>
            <person name="Apweiler R."/>
            <person name="Aturaliya R.N."/>
            <person name="Bailey T.L."/>
            <person name="Bansal M."/>
            <person name="Baxter L."/>
            <person name="Beisel K.W."/>
            <person name="Bersano T."/>
            <person name="Bono H."/>
            <person name="Chalk A.M."/>
            <person name="Chiu K.P."/>
            <person name="Choudhary V."/>
            <person name="Christoffels A."/>
            <person name="Clutterbuck D.R."/>
            <person name="Crowe M.L."/>
            <person name="Dalla E."/>
            <person name="Dalrymple B.P."/>
            <person name="de Bono B."/>
            <person name="Della Gatta G."/>
            <person name="di Bernardo D."/>
            <person name="Down T."/>
            <person name="Engstrom P."/>
            <person name="Fagiolini M."/>
            <person name="Faulkner G."/>
            <person name="Fletcher C.F."/>
            <person name="Fukushima T."/>
            <person name="Furuno M."/>
            <person name="Futaki S."/>
            <person name="Gariboldi M."/>
            <person name="Georgii-Hemming P."/>
            <person name="Gingeras T.R."/>
            <person name="Gojobori T."/>
            <person name="Green R.E."/>
            <person name="Gustincich S."/>
            <person name="Harbers M."/>
            <person name="Hayashi Y."/>
            <person name="Hensch T.K."/>
            <person name="Hirokawa N."/>
            <person name="Hill D."/>
            <person name="Huminiecki L."/>
            <person name="Iacono M."/>
            <person name="Ikeo K."/>
            <person name="Iwama A."/>
            <person name="Ishikawa T."/>
            <person name="Jakt M."/>
            <person name="Kanapin A."/>
            <person name="Katoh M."/>
            <person name="Kawasawa Y."/>
            <person name="Kelso J."/>
            <person name="Kitamura H."/>
            <person name="Kitano H."/>
            <person name="Kollias G."/>
            <person name="Krishnan S.P."/>
            <person name="Kruger A."/>
            <person name="Kummerfeld S.K."/>
            <person name="Kurochkin I.V."/>
            <person name="Lareau L.F."/>
            <person name="Lazarevic D."/>
            <person name="Lipovich L."/>
            <person name="Liu J."/>
            <person name="Liuni S."/>
            <person name="McWilliam S."/>
            <person name="Madan Babu M."/>
            <person name="Madera M."/>
            <person name="Marchionni L."/>
            <person name="Matsuda H."/>
            <person name="Matsuzawa S."/>
            <person name="Miki H."/>
            <person name="Mignone F."/>
            <person name="Miyake S."/>
            <person name="Morris K."/>
            <person name="Mottagui-Tabar S."/>
            <person name="Mulder N."/>
            <person name="Nakano N."/>
            <person name="Nakauchi H."/>
            <person name="Ng P."/>
            <person name="Nilsson R."/>
            <person name="Nishiguchi S."/>
            <person name="Nishikawa S."/>
            <person name="Nori F."/>
            <person name="Ohara O."/>
            <person name="Okazaki Y."/>
            <person name="Orlando V."/>
            <person name="Pang K.C."/>
            <person name="Pavan W.J."/>
            <person name="Pavesi G."/>
            <person name="Pesole G."/>
            <person name="Petrovsky N."/>
            <person name="Piazza S."/>
            <person name="Reed J."/>
            <person name="Reid J.F."/>
            <person name="Ring B.Z."/>
            <person name="Ringwald M."/>
            <person name="Rost B."/>
            <person name="Ruan Y."/>
            <person name="Salzberg S.L."/>
            <person name="Sandelin A."/>
            <person name="Schneider C."/>
            <person name="Schoenbach C."/>
            <person name="Sekiguchi K."/>
            <person name="Semple C.A."/>
            <person name="Seno S."/>
            <person name="Sessa L."/>
            <person name="Sheng Y."/>
            <person name="Shibata Y."/>
            <person name="Shimada H."/>
            <person name="Shimada K."/>
            <person name="Silva D."/>
            <person name="Sinclair B."/>
            <person name="Sperling S."/>
            <person name="Stupka E."/>
            <person name="Sugiura K."/>
            <person name="Sultana R."/>
            <person name="Takenaka Y."/>
            <person name="Taki K."/>
            <person name="Tammoja K."/>
            <person name="Tan S.L."/>
            <person name="Tang S."/>
            <person name="Taylor M.S."/>
            <person name="Tegner J."/>
            <person name="Teichmann S.A."/>
            <person name="Ueda H.R."/>
            <person name="van Nimwegen E."/>
            <person name="Verardo R."/>
            <person name="Wei C.L."/>
            <person name="Yagi K."/>
            <person name="Yamanishi H."/>
            <person name="Zabarovsky E."/>
            <person name="Zhu S."/>
            <person name="Zimmer A."/>
            <person name="Hide W."/>
            <person name="Bult C."/>
            <person name="Grimmond S.M."/>
            <person name="Teasdale R.D."/>
            <person name="Liu E.T."/>
            <person name="Brusic V."/>
            <person name="Quackenbush J."/>
            <person name="Wahlestedt C."/>
            <person name="Mattick J.S."/>
            <person name="Hume D.A."/>
            <person name="Kai C."/>
            <person name="Sasaki D."/>
            <person name="Tomaru Y."/>
            <person name="Fukuda S."/>
            <person name="Kanamori-Katayama M."/>
            <person name="Suzuki M."/>
            <person name="Aoki J."/>
            <person name="Arakawa T."/>
            <person name="Iida J."/>
            <person name="Imamura K."/>
            <person name="Itoh M."/>
            <person name="Kato T."/>
            <person name="Kawaji H."/>
            <person name="Kawagashira N."/>
            <person name="Kawashima T."/>
            <person name="Kojima M."/>
            <person name="Kondo S."/>
            <person name="Konno H."/>
            <person name="Nakano K."/>
            <person name="Ninomiya N."/>
            <person name="Nishio T."/>
            <person name="Okada M."/>
            <person name="Plessy C."/>
            <person name="Shibata K."/>
            <person name="Shiraki T."/>
            <person name="Suzuki S."/>
            <person name="Tagami M."/>
            <person name="Waki K."/>
            <person name="Watahiki A."/>
            <person name="Okamura-Oho Y."/>
            <person name="Suzuki H."/>
            <person name="Kawai J."/>
            <person name="Hayashizaki Y."/>
        </authorList>
    </citation>
    <scope>NUCLEOTIDE SEQUENCE [LARGE SCALE MRNA]</scope>
    <source>
        <strain>C57BL/6J</strain>
        <strain>NOD</strain>
        <tissue>Liver</tissue>
        <tissue>Urinary bladder</tissue>
    </source>
</reference>
<reference key="5">
    <citation type="journal article" date="2004" name="Genome Res.">
        <title>The status, quality, and expansion of the NIH full-length cDNA project: the Mammalian Gene Collection (MGC).</title>
        <authorList>
            <consortium name="The MGC Project Team"/>
        </authorList>
    </citation>
    <scope>NUCLEOTIDE SEQUENCE [LARGE SCALE MRNA]</scope>
    <source>
        <strain>C57BL/6J</strain>
        <tissue>Brain</tissue>
    </source>
</reference>
<reference key="6">
    <citation type="journal article" date="1993" name="Mol. Cell. Biol.">
        <title>Expression of mRNA encoding the macrophage colony-stimulating factor receptor (c-fms) is controlled by a constitutive promoter and tissue-specific transcription elongation.</title>
        <authorList>
            <person name="Yue X."/>
            <person name="Favot P."/>
            <person name="Dunn T.L."/>
            <person name="Cassady A.I."/>
            <person name="Hume D.A."/>
        </authorList>
    </citation>
    <scope>NUCLEOTIDE SEQUENCE [GENOMIC DNA] OF 1-16</scope>
</reference>
<reference key="7">
    <citation type="journal article" date="1990" name="Mol. Cell. Biol.">
        <title>Identification of tyrosine 706 in the kinase insert as the major colony-stimulating factor 1 (CSF-1)-stimulated autophosphorylation site in the CSF-1 receptor in a murine macrophage cell line.</title>
        <authorList>
            <person name="van der Geer P."/>
            <person name="Hunter T."/>
        </authorList>
    </citation>
    <scope>PHOSPHORYLATION AT TYR-706 AND TYR-807</scope>
</reference>
<reference key="8">
    <citation type="journal article" date="1991" name="Mol. Cell. Biol.">
        <title>Tyrosine 706 and 807 phosphorylation site mutants in the murine colony-stimulating factor-1 receptor are unaffected in their ability to bind or phosphorylate phosphatidylinositol-3 kinase but show differential defects in their ability to induce early response gene transcription.</title>
        <authorList>
            <person name="van der Geer P."/>
            <person name="Hunter T."/>
        </authorList>
    </citation>
    <scope>FUNCTION IN CELL PROLIFERATION AND PHOSPHORYLATION OF PIK3R1</scope>
    <scope>INTERACTION WITH PIK3R1</scope>
    <scope>PHOSPHORYLATION AT TYR-706 AND TYR-807</scope>
    <scope>MUTAGENESIS OF TYR-706 AND TYR-807</scope>
</reference>
<reference key="9">
    <citation type="journal article" date="1993" name="EMBO J.">
        <title>Mutation of Tyr697, a GRB2-binding site, and Tyr721, a PI 3-kinase binding site, abrogates signal transduction by the murine CSF-1 receptor expressed in Rat-2 fibroblasts.</title>
        <authorList>
            <person name="van der Geer P."/>
            <person name="Hunter T."/>
        </authorList>
    </citation>
    <scope>FUNCTION AS CSF1 RECEPTOR</scope>
    <scope>CATALYTIC ACTIVITY</scope>
    <scope>AUTOPHOSPHORYLATION</scope>
    <scope>PHOSPHORYLATION AT TYR-697; TYR-706; TYR-721 AND TYR-807</scope>
    <scope>MUTAGENESIS OF LYS-614; TYR-697 AND TYR-721</scope>
    <scope>INTERACTION WITH GRB2</scope>
</reference>
<reference key="10">
    <citation type="journal article" date="1994" name="Mol. Cell. Biol.">
        <title>Tyrosine 569 in the c-Fms juxtamembrane domain is essential for kinase activity and macrophage colony-stimulating factor-dependent internalization.</title>
        <authorList>
            <person name="Myles G.M."/>
            <person name="Brandt C.S."/>
            <person name="Carlberg K."/>
            <person name="Rohrschneider L.R."/>
        </authorList>
    </citation>
    <scope>FUNCTION AS CSF1 RECEPTOR IN CELL PROLIFERATION AND IN ACTIVATION OF AKT1; MAPK1/ERK2; MAPK3/ERK1; STAT3; STAT5A AND STAT5B</scope>
    <scope>INTERACTION WITH CBL; YES1; FYN AND SRC</scope>
    <scope>SUBCELLULAR LOCATION</scope>
    <scope>CATALYTIC ACTIVITY</scope>
    <scope>AUTOPHOSPHORYLATION</scope>
    <scope>PHOSPHORYLATION AT TYR-559 AND TYR-807</scope>
    <scope>UBIQUITINATION</scope>
    <scope>MUTAGENESIS OF TYR-559</scope>
</reference>
<reference key="11">
    <citation type="journal article" date="1997" name="EMBO J.">
        <title>Sequential activation of phoshatidylinositol 3-kinase and phospholipase C-gamma2 by the M-CSF receptor is necessary for differentiation signaling.</title>
        <authorList>
            <person name="Bourette R.P."/>
            <person name="Myles G.M."/>
            <person name="Choi J.L."/>
            <person name="Rohrschneider L.R."/>
        </authorList>
    </citation>
    <scope>FUNCTION IN MACROPHAGE PROLIFERATION; MACROPHAGE DIFFERENTIATION; PHOSPHORYLATION OF PLCG2; PHOSPHORYLATION OF PIK3R1 AND PHOSPHORYLATION OF GRB2</scope>
    <scope>CATALYTIC ACTIVITY</scope>
    <scope>INTERACTION WITH PIK3R1; GRB2; PLCG2 AND FYN</scope>
    <scope>MUTAGENESIS OF LYS-614; TYR-697; TYR-721 AND TYR-807</scope>
</reference>
<reference key="12">
    <citation type="journal article" date="1999" name="Oncogene">
        <title>FMIP, a novel Fms-interacting protein, affects granulocyte/macrophage differentiation.</title>
        <authorList>
            <person name="Tamura T."/>
            <person name="Mancini A."/>
            <person name="Joos H."/>
            <person name="Koch A."/>
            <person name="Hakim C."/>
            <person name="Dumanski J."/>
            <person name="Weidner K.M."/>
            <person name="Niemann H."/>
        </authorList>
    </citation>
    <scope>INTERACTION WITH THOC5</scope>
    <scope>MUTAGENESIS OF TYR-544; LYS-614; TYR-706; TYR-721 AND TYR-807</scope>
</reference>
<reference key="13">
    <citation type="journal article" date="2000" name="Mol. Cell. Biol.">
        <title>Both src-dependent and -independent mechanisms mediate phosphatidylinositol 3-kinase regulation of colony-stimulating factor 1-activated mitogen-activated protein kinases in myeloid progenitors.</title>
        <authorList>
            <person name="Lee A.W."/>
            <person name="States D.J."/>
        </authorList>
    </citation>
    <scope>FUNCTION</scope>
</reference>
<reference key="14">
    <citation type="journal article" date="2002" name="Blood">
        <title>Targeted disruption of the mouse colony-stimulating factor 1 receptor gene results in osteopetrosis, mononuclear phagocyte deficiency, increased primitive progenitor cell frequencies, and reproductive defects.</title>
        <authorList>
            <person name="Dai X.M."/>
            <person name="Ryan G.R."/>
            <person name="Hapel A.J."/>
            <person name="Dominguez M.G."/>
            <person name="Russell R.G."/>
            <person name="Kapp S."/>
            <person name="Sylvestre V."/>
            <person name="Stanley E.R."/>
        </authorList>
    </citation>
    <scope>DISRUPTION PHENOTYPE</scope>
    <scope>FUNCTION</scope>
</reference>
<reference key="15">
    <citation type="journal article" date="2002" name="Oncogene">
        <title>C-Cbl binds the CSF-1 receptor at tyrosine 973, a novel phosphorylation site in the receptor's carboxy-terminus.</title>
        <authorList>
            <person name="Wilhelmsen K."/>
            <person name="Burkhalter S."/>
            <person name="van der Geer P."/>
        </authorList>
    </citation>
    <scope>INTERACTION WITH CBL</scope>
    <scope>PHOSPHORYLATION AT TYR-974</scope>
</reference>
<reference key="16">
    <citation type="journal article" date="2004" name="J. Biol. Chem.">
        <title>A juxtamembrane tyrosine in the colony stimulating factor-1 receptor regulates ligand-induced Src association, receptor kinase function, and down-regulation.</title>
        <authorList>
            <person name="Rohde C.M."/>
            <person name="Schrum J."/>
            <person name="Lee A.W."/>
        </authorList>
    </citation>
    <scope>MUTAGENESIS OF TYR-559</scope>
    <scope>PHOSPHORYLATION AT TYR-559</scope>
    <scope>DOMAIN</scope>
    <scope>ACTIVITY REGULATION</scope>
</reference>
<reference key="17">
    <citation type="journal article" date="2004" name="J. Immunol.">
        <title>SHIP2 is recruited to the cell membrane upon macrophage colony-stimulating factor (M-CSF) stimulation and regulates M-CSF-induced signaling.</title>
        <authorList>
            <person name="Wang Y."/>
            <person name="Keogh R.J."/>
            <person name="Hunter M.G."/>
            <person name="Mitchell C.A."/>
            <person name="Frey R.S."/>
            <person name="Javaid K."/>
            <person name="Malik A.B."/>
            <person name="Schurmans S."/>
            <person name="Tridandapani S."/>
            <person name="Marsh C.B."/>
        </authorList>
    </citation>
    <scope>INTERACTION WITH INPPL1</scope>
</reference>
<reference key="18">
    <citation type="journal article" date="2006" name="Bone">
        <title>Activated c-Fms recruits Vav and Rac during CSF-1-induced cytoskeletal remodeling and spreading in osteoclasts.</title>
        <authorList>
            <person name="Sakai H."/>
            <person name="Chen Y."/>
            <person name="Itokawa T."/>
            <person name="Yu K.P."/>
            <person name="Zhu M.L."/>
            <person name="Insogna K."/>
        </authorList>
    </citation>
    <scope>FUNCTION</scope>
</reference>
<reference key="19">
    <citation type="journal article" date="2006" name="J. Proteome Res.">
        <title>Proteome-wide characterization of N-glycosylation events by diagonal chromatography.</title>
        <authorList>
            <person name="Ghesquiere B."/>
            <person name="Van Damme J."/>
            <person name="Martens L."/>
            <person name="Vandekerckhove J."/>
            <person name="Gevaert K."/>
        </authorList>
    </citation>
    <scope>GLYCOSYLATION [LARGE SCALE ANALYSIS] AT ASN-491</scope>
    <source>
        <strain>C57BL/6J</strain>
        <tissue>Plasma</tissue>
    </source>
</reference>
<reference key="20">
    <citation type="journal article" date="2006" name="Mol. Cell. Biol.">
        <title>T-cell protein tyrosine phosphatase (Tcptp) is a negative regulator of colony-stimulating factor 1 signaling and macrophage differentiation.</title>
        <authorList>
            <person name="Simoncic P.D."/>
            <person name="Bourdeau A."/>
            <person name="Lee-Loy A."/>
            <person name="Rohrschneider L.R."/>
            <person name="Tremblay M.L."/>
            <person name="Stanley E.R."/>
            <person name="McGlade C.J."/>
        </authorList>
    </citation>
    <scope>PHOSPHORYLATION</scope>
    <scope>DEPHOSPHORYLATION BY PTPN2</scope>
</reference>
<reference key="21">
    <citation type="journal article" date="2007" name="J. Biol. Chem.">
        <title>The Src-like adaptor protein 2 regulates colony-stimulating factor-1 receptor signaling and down-regulation.</title>
        <authorList>
            <person name="Pakuts B."/>
            <person name="Debonneville C."/>
            <person name="Liontos L.M."/>
            <person name="Loreto M.P."/>
            <person name="McGlade C.J."/>
        </authorList>
    </citation>
    <scope>FUNCTION IN PHOSPHORYLATION OF SLA2</scope>
    <scope>INTERACTION WITH SLA2 AND CBL</scope>
    <scope>SUBCELLULAR LOCATION</scope>
    <scope>UBIQUITINATION</scope>
</reference>
<reference key="22">
    <citation type="journal article" date="2007" name="J. Biol. Chem.">
        <title>c-Fms tyrosine 559 is a major mediator of M-CSF-induced proliferation of primary macrophages.</title>
        <authorList>
            <person name="Takeshita S."/>
            <person name="Faccio R."/>
            <person name="Chappel J."/>
            <person name="Zheng L."/>
            <person name="Feng X."/>
            <person name="Weber J.D."/>
            <person name="Teitelbaum S.L."/>
            <person name="Ross F.P."/>
        </authorList>
    </citation>
    <scope>FUNCTION</scope>
    <scope>MUTAGENESIS OF TYR-559</scope>
    <scope>PHOSPHORYLATION AT TYR-921</scope>
</reference>
<reference key="23">
    <citation type="journal article" date="2007" name="J. Biol. Chem.">
        <title>M-CSF regulates the cytoskeleton via recruitment of a multimeric signaling complex to c-Fms Tyr-559/697/721.</title>
        <authorList>
            <person name="Faccio R."/>
            <person name="Takeshita S."/>
            <person name="Colaianni G."/>
            <person name="Chappel J."/>
            <person name="Zallone A."/>
            <person name="Teitelbaum S.L."/>
            <person name="Ross F.P."/>
        </authorList>
    </citation>
    <scope>FUNCTION</scope>
</reference>
<reference key="24">
    <citation type="journal article" date="2008" name="Leukemia">
        <title>Src-family kinases play an essential role in differentiation signaling downstream of macrophage colony-stimulating factor receptors mediating persistent phosphorylation of phospholipase C-gamma2 and MAP kinases ERK1 and ERK2.</title>
        <authorList>
            <person name="Bourgin-Hierle C."/>
            <person name="Gobert-Gosse S."/>
            <person name="Therier J."/>
            <person name="Grasset M.F."/>
            <person name="Mouchiroud G."/>
        </authorList>
    </citation>
    <scope>FUNCTION</scope>
    <scope>SIGNALING PATHWAY</scope>
</reference>
<reference key="25">
    <citation type="journal article" date="2009" name="Immunity">
        <title>The phagosomal proteome in interferon-gamma-activated macrophages.</title>
        <authorList>
            <person name="Trost M."/>
            <person name="English L."/>
            <person name="Lemieux S."/>
            <person name="Courcelles M."/>
            <person name="Desjardins M."/>
            <person name="Thibault P."/>
        </authorList>
    </citation>
    <scope>IDENTIFICATION BY MASS SPECTROMETRY [LARGE SCALE ANALYSIS]</scope>
</reference>
<reference key="26">
    <citation type="journal article" date="2009" name="Int. J. Cancer">
        <title>Imatinib mesylate suppresses bone metastases of breast cancer by inhibiting osteoclasts through the blockade of c-Fms signals.</title>
        <authorList>
            <person name="Hiraga T."/>
            <person name="Nakamura H."/>
        </authorList>
    </citation>
    <scope>FUNCTION IN OSTEOCLAST DIFFERENTIATION</scope>
    <scope>ROLE IN DISEASE</scope>
    <scope>ACTIVITY REGULATION</scope>
</reference>
<reference key="27">
    <citation type="journal article" date="2010" name="Arthritis Res. Ther.">
        <title>c-Fms-mediated differentiation and priming of monocyte lineage cells play a central role in autoimmune arthritis.</title>
        <authorList>
            <person name="Paniagua R.T."/>
            <person name="Chang A."/>
            <person name="Mariano M.M."/>
            <person name="Stein E.A."/>
            <person name="Wang Q."/>
            <person name="Lindstrom T.M."/>
            <person name="Sharpe O."/>
            <person name="Roscow C."/>
            <person name="Ho P.P."/>
            <person name="Lee D.M."/>
            <person name="Robinson W.H."/>
        </authorList>
    </citation>
    <scope>ROLE IN DISEASE</scope>
</reference>
<reference key="28">
    <citation type="journal article" date="2010" name="Cell">
        <title>A tissue-specific atlas of mouse protein phosphorylation and expression.</title>
        <authorList>
            <person name="Huttlin E.L."/>
            <person name="Jedrychowski M.P."/>
            <person name="Elias J.E."/>
            <person name="Goswami T."/>
            <person name="Rad R."/>
            <person name="Beausoleil S.A."/>
            <person name="Villen J."/>
            <person name="Haas W."/>
            <person name="Sowa M.E."/>
            <person name="Gygi S.P."/>
        </authorList>
    </citation>
    <scope>PHOSPHORYLATION [LARGE SCALE ANALYSIS] AT SER-711</scope>
    <scope>IDENTIFICATION BY MASS SPECTROMETRY [LARGE SCALE ANALYSIS]</scope>
    <source>
        <tissue>Brain</tissue>
        <tissue>Spleen</tissue>
    </source>
</reference>
<reference key="29">
    <citation type="journal article" date="2010" name="J. Leukoc. Biol.">
        <title>Functional overlap but differential expression of CSF-1 and IL-34 in their CSF-1 receptor-mediated regulation of myeloid cells.</title>
        <authorList>
            <person name="Wei S."/>
            <person name="Nandi S."/>
            <person name="Chitu V."/>
            <person name="Yeung Y.G."/>
            <person name="Yu W."/>
            <person name="Huang M."/>
            <person name="Williams L.T."/>
            <person name="Lin H."/>
            <person name="Stanley E.R."/>
        </authorList>
    </citation>
    <scope>FUNCTION AS IL34 AND CSF1 RECEPTOR</scope>
    <scope>FUNCTION IN ACTIVATION OF MAPK1/ERK2 AND MAPK3/ERK1</scope>
    <scope>PHOSPHORYLATION AT TYR-559; TYR-807 AND TYR-721</scope>
    <scope>AUTOPHOSPHORYLATION</scope>
    <scope>TISSUE SPECIFICITY</scope>
</reference>
<reference key="30">
    <citation type="journal article" date="2012" name="Immunol. Cell Biol.">
        <title>Control of macrophage lineage populations by CSF-1 receptor and GM-CSF in homeostasis and inflammation.</title>
        <authorList>
            <person name="Lenzo J.C."/>
            <person name="Turner A.L."/>
            <person name="Cook A.D."/>
            <person name="Vlahos R."/>
            <person name="Anderson G.P."/>
            <person name="Reynolds E.C."/>
            <person name="Hamilton J.A."/>
        </authorList>
    </citation>
    <scope>FUNCTION</scope>
</reference>
<reference key="31">
    <citation type="journal article" date="2011" name="J. Biol. Chem.">
        <title>A CSF-1 receptor phosphotyrosine 559 signaling pathway regulates receptor ubiquitination and tyrosine phosphorylation.</title>
        <authorList>
            <person name="Xiong Y."/>
            <person name="Song D."/>
            <person name="Cai Y."/>
            <person name="Yu W."/>
            <person name="Yeung Y.G."/>
            <person name="Stanley E.R."/>
        </authorList>
    </citation>
    <scope>UBIQUITINATION</scope>
</reference>
<reference key="32">
    <citation type="journal article" date="2011" name="J. Cell Sci.">
        <title>Phosphorylation of CSF-1R Y721 mediates its association with PI3K to regulate macrophage motility and enhancement of tumor cell invasion.</title>
        <authorList>
            <person name="Sampaio N.G."/>
            <person name="Yu W."/>
            <person name="Cox D."/>
            <person name="Wyckoff J."/>
            <person name="Condeelis J."/>
            <person name="Stanley E.R."/>
            <person name="Pixley F.J."/>
        </authorList>
    </citation>
    <scope>FUNCTION IN REGULATION OF CELL MOTILITY; CELL SHAPE; ACTIN CYTOSKELETON REORGANIZATION; PHOSPHORYLATION OF AKT1 AND REGULATION OF PHOSPHATIDYLINOSITOL METABOLISM</scope>
    <scope>INTERACTION WITH PIK3R1 AND PLCG2</scope>
    <scope>PHOSPHORYLATION AT TYR-706 AND TYR-721</scope>
    <scope>MUTAGENESIS OF TYR-721</scope>
</reference>
<reference key="33">
    <citation type="journal article" date="2008" name="Proc. Natl. Acad. Sci. U.S.A.">
        <title>Structure of macrophage colony stimulating factor bound to FMS: diverse signaling assemblies of class III receptor tyrosine kinases.</title>
        <authorList>
            <person name="Chen X."/>
            <person name="Liu H."/>
            <person name="Focia P.J."/>
            <person name="Shim A.H."/>
            <person name="He X."/>
        </authorList>
    </citation>
    <scope>X-RAY CRYSTALLOGRAPHY (2.4 ANGSTROMS) OF 20-296 IN COMPLEX WITH CSF1</scope>
    <scope>GLYCOSYLATION AT ASN-45 AND ASN-73</scope>
    <scope>SUBUNIT</scope>
    <scope>DISULFIDE BONDS</scope>
</reference>
<proteinExistence type="evidence at protein level"/>
<sequence>MELGPPLVLLLATVWHGQGAPVIEPSGPELVVEPGETVTLRCVSNGSVEWDGPISPYWTLDPESPGSTLTTRNATFKNTGTYRCTELEDPMAGSTTIHLYVKDPAHSWNLLAQEVTVVEGQEAVLPCLITDPALKDSVSLMREGGRQVLRKTVYFFSPWRGFIIRKAKVLDSNTYVCKTMVNGRESTSTGIWLKVNRVHPEPPQIKLEPSKLVRIRGEAAQIVCSATNAEVGFNVILKRGDTKLEIPLNSDFQDNYYKKVRALSLNAVDFQDAGIYSCVASNDVGTRTATMNFQVVESAYLNLTSEQSLLQEVSVGDSLILTVHADAYPSIQHYNWTYLGPFFEDQRKLEFITQRAIYRYTFKLFLNRVKASEAGQYFLMAQNKAGWNNLTFELTLRYPPEVSVTWMPVNGSDVLFCDVSGYPQPSVTWMECRGHTDRCDEAQALQVWNDTHPEVLSQKPFDKVIIQSQLPIGTLKHNMTYFCKTHNSVGNSSQYFRAVSLGQSKQLPDESLFTPVVVACMSVMSLLVLLLLLLLYKYKQKPKYQVRWKIIERYEGNSYTFIDPTQLPYNEKWEFPRNNLQFGKTLGAGAFGKVVEATAFGLGKEDAVLKVAVKMLKSTAHADEKEALMSELKIMSHLGQHENIVNLLGACTHGGPVLVITEYCCYGDLLNFLRRKAEAMLGPSLSPGQDSEGDSSYKNIHLEKKYVRRDSGFSSQGVDTYVEMRPVSTSSSDSFFKQDLDKEASRPLELWDLLHFSSQVAQGMAFLASKNCIHRDVAARNVLLTSGHVAKIGDFGLARDIMNDSNYVVKGNARLPVKWMAPESIFDCVYTVQSDVWSYGILLWEIFSLGLNPYPGILVNNKFYKLVKDGYQMAQPVFAPKNIYSIMQSCWDLEPTRRPTFQQICFLLQEQARLERRDQDYANLPSSGGSSGSDSGGGSSGGSSSEPEEESSSEHLACCEPGDIAQPLLQPNNYQFC</sequence>
<comment type="function">
    <text evidence="2 9 10 14 16 17 18 19 20 21 23 24 26 27 28 29 30">Tyrosine-protein kinase that acts as a cell-surface receptor for CSF1 and IL34 and plays an essential role in the regulation of survival, proliferation and differentiation of hematopoietic precursor cells, especially mononuclear phagocytes, such as macrophages and monocytes. Promotes the release of pro-inflammatory chemokines in response to IL34 and CSF1, and thereby plays an important role in innate immunity and in inflammatory processes. Plays an important role in the regulation of osteoclast proliferation and differentiation, the regulation of bone resorption, and is required for normal bone and tooth development. Required for normal male and female fertility, and for normal development of milk ducts and acinar structures in the mammary gland during pregnancy. Promotes reorganization of the actin cytoskeleton, regulates formation of membrane ruffles, cell adhesion and cell migration, and promotes cancer cell invasion. Activates several signaling pathways in response to ligand binding, including the ERK1/2 and the JNK pathway (By similarity). Phosphorylates PIK3R1, PLCG2, GRB2, SLA2 and CBL. Activation of PLCG2 leads to the production of the cellular signaling molecules diacylglycerol and inositol 1,4,5-trisphosphate, that then lead to the activation of protein kinase C family members, especially PRKCD. Phosphorylation of PIK3R1, the regulatory subunit of phosphatidylinositol 3-kinase, leads to activation of the AKT1 signaling pathway. Activated CSF1R also mediates activation of the MAP kinases MAPK1/ERK2 and/or MAPK3/ERK1, and of the SRC family kinases SRC, FYN and YES1. Activated CSF1R transmits signals both via proteins that directly interact with phosphorylated tyrosine residues in its intracellular domain, or via adapter proteins, such as GRB2. Promotes activation of STAT family members STAT3, STAT5A and/or STAT5B. Promotes tyrosine phosphorylation of SHC1 and INPP5D/SHIP-1. Receptor signaling is down-regulated by protein phosphatases, such as INPP5D/SHIP-1, that dephosphorylate the receptor and its downstream effectors, and by rapid internalization of the activated receptor. In the central nervous system, may play a role in the development of microglia macrophages (By similarity).</text>
</comment>
<comment type="catalytic activity">
    <reaction evidence="6 28 29 30">
        <text>L-tyrosyl-[protein] + ATP = O-phospho-L-tyrosyl-[protein] + ADP + H(+)</text>
        <dbReference type="Rhea" id="RHEA:10596"/>
        <dbReference type="Rhea" id="RHEA-COMP:10136"/>
        <dbReference type="Rhea" id="RHEA-COMP:20101"/>
        <dbReference type="ChEBI" id="CHEBI:15378"/>
        <dbReference type="ChEBI" id="CHEBI:30616"/>
        <dbReference type="ChEBI" id="CHEBI:46858"/>
        <dbReference type="ChEBI" id="CHEBI:61978"/>
        <dbReference type="ChEBI" id="CHEBI:456216"/>
        <dbReference type="EC" id="2.7.10.1"/>
    </reaction>
</comment>
<comment type="activity regulation">
    <text evidence="12 21">Present in an inactive conformation in the absence of bound ligand. CSF1 or IL34 binding leads to dimerization and activation by autophosphorylation on tyrosine residues. Inhibited by imatinib/STI-571 (Gleevec), dasatinib, sunitinib/SU11248, lestaurtinib/CEP-701, midostaurin/PKC-412, Ki20227, linifanib/ABT-869, Axitinib/AG013736, sorafenib/BAY 43-9006 and GW2580.</text>
</comment>
<comment type="subunit">
    <text evidence="8 11 13 14 17 22 26 28 29 30">Monomer. Homodimer. Interacts with CSF1 and IL34. Interaction with dimeric CSF1 or IL34 leads to receptor homodimerization. Interacts with INPPL1/SHIP2 and THOC5. Interacts (tyrosine phosphorylated) with PLCG2 (via SH2 domain). Interacts (tyrosine phosphorylated) with PIK3R1 (via SH2 domain). Interacts (tyrosine phosphorylated) with FYN, YES1 and SRC (via SH2 domain). Interacts (tyrosine phosphorylated) with CBL, GRB2 and SLA2.</text>
</comment>
<comment type="interaction">
    <interactant intactId="EBI-6305373">
        <id>P09581</id>
    </interactant>
    <interactant intactId="EBI-777188">
        <id>P07141</id>
        <label>Csf1</label>
    </interactant>
    <organismsDiffer>false</organismsDiffer>
    <experiments>6</experiments>
</comment>
<comment type="interaction">
    <interactant intactId="EBI-6305373">
        <id>P09581</id>
    </interactant>
    <interactant intactId="EBI-2872294">
        <id>P09603</id>
        <label>CSF1</label>
    </interactant>
    <organismsDiffer>true</organismsDiffer>
    <experiments>2</experiments>
</comment>
<comment type="subcellular location">
    <subcellularLocation>
        <location evidence="17 28">Cell membrane</location>
        <topology evidence="17 28">Single-pass type I membrane protein</topology>
    </subcellularLocation>
    <text>The autophosphorylated receptor is ubiquitinated and internalized, leading to its degradation.</text>
</comment>
<comment type="tissue specificity">
    <text evidence="24">Widely expressed.</text>
</comment>
<comment type="domain">
    <text evidence="1">The juxtamembrane domain functions as autoinhibitory region. Phosphorylation of tyrosine residues in this region leads to a conformation change and activation of the kinase (By similarity).</text>
</comment>
<comment type="domain">
    <text evidence="1">The activation loop plays an important role in the regulation of kinase activity. Phosphorylation of tyrosine residues in this region leads to a conformation change and activation of the kinase (By similarity).</text>
</comment>
<comment type="PTM">
    <text evidence="11 12 14 18 24 25 26 28 29">Autophosphorylated in response to CSF1 or IL34 binding. Phosphorylation at Tyr-559 is important for normal down-regulation of signaling by ubiquitination, internalization and degradation. Phosphorylation at Tyr-559 and Tyr-807 is important for interaction with SRC family members, including FYN, YES1 and SRC, and for subsequent activation of these protein kinases. Phosphorylation at Tyr-697 and Tyr-921 is important for interaction with GRB2. Phosphorylation at Tyr-721 is important for interaction with PIK3R1. Phosphorylation at Tyr-721 and Tyr-807 is important for interaction with PLCG2. Phosphorylation at Tyr-974 is important for interaction with CBL. Dephosphorylation by PTPN2 negatively regulates downstream signaling and macrophage differentiation.</text>
</comment>
<comment type="PTM">
    <text>Ubiquitinated. Becomes rapidly polyubiquitinated after autophosphorylation, leading to its degradation.</text>
</comment>
<comment type="disruption phenotype">
    <text evidence="10">Mice are born at slightly less than the expected Mendelian rate, and the number of surviving mice is significantly reduced after three weeks. Mice are considerably smaller than wild-type littermates and suffer from general skeletal deformities with shortened limbs, increased bone density, and decreased volume of femoral bone marrow. Mice have decreased numbers of circulating monocytes and lymphocytes, decreased numbers of tissue macrophages, paired with an increase in the number of circulating granulocytes. In addition, mice are deaf and have reduced male and female fertility. In females, the duration of the diestrous period is increased, and in pregnant females the lactating mammary gland fails to develop normally. Males mate less frequently and give rise to fewer pregnant females.</text>
</comment>
<comment type="similarity">
    <text evidence="5">Belongs to the protein kinase superfamily. Tyr protein kinase family. CSF-1/PDGF receptor subfamily.</text>
</comment>
<accession>P09581</accession>
<accession>Q3U3P1</accession>
<accession>Q9DBH9</accession>